<evidence type="ECO:0000255" key="1">
    <source>
        <dbReference type="HAMAP-Rule" id="MF_01369"/>
    </source>
</evidence>
<evidence type="ECO:0000305" key="2"/>
<proteinExistence type="inferred from homology"/>
<name>RL23_STRP3</name>
<reference key="1">
    <citation type="journal article" date="2002" name="Proc. Natl. Acad. Sci. U.S.A.">
        <title>Genome sequence of a serotype M3 strain of group A Streptococcus: phage-encoded toxins, the high-virulence phenotype, and clone emergence.</title>
        <authorList>
            <person name="Beres S.B."/>
            <person name="Sylva G.L."/>
            <person name="Barbian K.D."/>
            <person name="Lei B."/>
            <person name="Hoff J.S."/>
            <person name="Mammarella N.D."/>
            <person name="Liu M.-Y."/>
            <person name="Smoot J.C."/>
            <person name="Porcella S.F."/>
            <person name="Parkins L.D."/>
            <person name="Campbell D.S."/>
            <person name="Smith T.M."/>
            <person name="McCormick J.K."/>
            <person name="Leung D.Y.M."/>
            <person name="Schlievert P.M."/>
            <person name="Musser J.M."/>
        </authorList>
    </citation>
    <scope>NUCLEOTIDE SEQUENCE [LARGE SCALE GENOMIC DNA]</scope>
    <source>
        <strain>ATCC BAA-595 / MGAS315</strain>
    </source>
</reference>
<comment type="function">
    <text evidence="1">One of the early assembly proteins it binds 23S rRNA. One of the proteins that surrounds the polypeptide exit tunnel on the outside of the ribosome. Forms the main docking site for trigger factor binding to the ribosome.</text>
</comment>
<comment type="subunit">
    <text evidence="1">Part of the 50S ribosomal subunit. Contacts protein L29, and trigger factor when it is bound to the ribosome.</text>
</comment>
<comment type="similarity">
    <text evidence="1">Belongs to the universal ribosomal protein uL23 family.</text>
</comment>
<protein>
    <recommendedName>
        <fullName evidence="1">Large ribosomal subunit protein uL23</fullName>
    </recommendedName>
    <alternativeName>
        <fullName evidence="2">50S ribosomal protein L23</fullName>
    </alternativeName>
</protein>
<dbReference type="EMBL" id="AE014074">
    <property type="protein sequence ID" value="AAM78649.1"/>
    <property type="molecule type" value="Genomic_DNA"/>
</dbReference>
<dbReference type="RefSeq" id="WP_002986656.1">
    <property type="nucleotide sequence ID" value="NC_004070.1"/>
</dbReference>
<dbReference type="SMR" id="P0DE24"/>
<dbReference type="KEGG" id="spg:SpyM3_0042"/>
<dbReference type="HOGENOM" id="CLU_037562_3_2_9"/>
<dbReference type="Proteomes" id="UP000000564">
    <property type="component" value="Chromosome"/>
</dbReference>
<dbReference type="GO" id="GO:1990904">
    <property type="term" value="C:ribonucleoprotein complex"/>
    <property type="evidence" value="ECO:0007669"/>
    <property type="project" value="UniProtKB-KW"/>
</dbReference>
<dbReference type="GO" id="GO:0005840">
    <property type="term" value="C:ribosome"/>
    <property type="evidence" value="ECO:0007669"/>
    <property type="project" value="UniProtKB-KW"/>
</dbReference>
<dbReference type="GO" id="GO:0019843">
    <property type="term" value="F:rRNA binding"/>
    <property type="evidence" value="ECO:0007669"/>
    <property type="project" value="UniProtKB-UniRule"/>
</dbReference>
<dbReference type="GO" id="GO:0003735">
    <property type="term" value="F:structural constituent of ribosome"/>
    <property type="evidence" value="ECO:0007669"/>
    <property type="project" value="InterPro"/>
</dbReference>
<dbReference type="GO" id="GO:0006412">
    <property type="term" value="P:translation"/>
    <property type="evidence" value="ECO:0007669"/>
    <property type="project" value="UniProtKB-UniRule"/>
</dbReference>
<dbReference type="FunFam" id="3.30.70.330:FF:000001">
    <property type="entry name" value="50S ribosomal protein L23"/>
    <property type="match status" value="1"/>
</dbReference>
<dbReference type="Gene3D" id="3.30.70.330">
    <property type="match status" value="1"/>
</dbReference>
<dbReference type="HAMAP" id="MF_01369_B">
    <property type="entry name" value="Ribosomal_uL23_B"/>
    <property type="match status" value="1"/>
</dbReference>
<dbReference type="InterPro" id="IPR012677">
    <property type="entry name" value="Nucleotide-bd_a/b_plait_sf"/>
</dbReference>
<dbReference type="InterPro" id="IPR013025">
    <property type="entry name" value="Ribosomal_uL23-like"/>
</dbReference>
<dbReference type="InterPro" id="IPR012678">
    <property type="entry name" value="Ribosomal_uL23/eL15/eS24_sf"/>
</dbReference>
<dbReference type="InterPro" id="IPR001014">
    <property type="entry name" value="Ribosomal_uL23_CS"/>
</dbReference>
<dbReference type="NCBIfam" id="NF004361">
    <property type="entry name" value="PRK05738.2-1"/>
    <property type="match status" value="1"/>
</dbReference>
<dbReference type="NCBIfam" id="NF004363">
    <property type="entry name" value="PRK05738.2-4"/>
    <property type="match status" value="1"/>
</dbReference>
<dbReference type="PANTHER" id="PTHR11620">
    <property type="entry name" value="60S RIBOSOMAL PROTEIN L23A"/>
    <property type="match status" value="1"/>
</dbReference>
<dbReference type="Pfam" id="PF00276">
    <property type="entry name" value="Ribosomal_L23"/>
    <property type="match status" value="1"/>
</dbReference>
<dbReference type="SUPFAM" id="SSF54189">
    <property type="entry name" value="Ribosomal proteins S24e, L23 and L15e"/>
    <property type="match status" value="1"/>
</dbReference>
<dbReference type="PROSITE" id="PS00050">
    <property type="entry name" value="RIBOSOMAL_L23"/>
    <property type="match status" value="1"/>
</dbReference>
<sequence length="98" mass="10732">MNLYDVIKKPVITEKSMIALEAGKYTFEVDTRAHKLLIKQAVEAAFDGVKVASVNTVNVKPKAKRVGRYTGFTSKTKKAIITLTADSKAIELFAAEAE</sequence>
<keyword id="KW-0687">Ribonucleoprotein</keyword>
<keyword id="KW-0689">Ribosomal protein</keyword>
<keyword id="KW-0694">RNA-binding</keyword>
<keyword id="KW-0699">rRNA-binding</keyword>
<feature type="chain" id="PRO_1000068163" description="Large ribosomal subunit protein uL23">
    <location>
        <begin position="1"/>
        <end position="98"/>
    </location>
</feature>
<accession>P0DE24</accession>
<accession>Q79YR9</accession>
<accession>Q7CFL4</accession>
<gene>
    <name evidence="1" type="primary">rplW</name>
    <name type="ordered locus">SpyM3_0042</name>
</gene>
<organism>
    <name type="scientific">Streptococcus pyogenes serotype M3 (strain ATCC BAA-595 / MGAS315)</name>
    <dbReference type="NCBI Taxonomy" id="198466"/>
    <lineage>
        <taxon>Bacteria</taxon>
        <taxon>Bacillati</taxon>
        <taxon>Bacillota</taxon>
        <taxon>Bacilli</taxon>
        <taxon>Lactobacillales</taxon>
        <taxon>Streptococcaceae</taxon>
        <taxon>Streptococcus</taxon>
    </lineage>
</organism>